<evidence type="ECO:0000255" key="1">
    <source>
        <dbReference type="HAMAP-Rule" id="MF_01451"/>
    </source>
</evidence>
<dbReference type="EC" id="3.1.-.-" evidence="1"/>
<dbReference type="EC" id="5.6.2.4" evidence="1"/>
<dbReference type="EMBL" id="AE001437">
    <property type="protein sequence ID" value="AAK80219.1"/>
    <property type="molecule type" value="Genomic_DNA"/>
</dbReference>
<dbReference type="PIR" id="H97178">
    <property type="entry name" value="H97178"/>
</dbReference>
<dbReference type="RefSeq" id="NP_348879.1">
    <property type="nucleotide sequence ID" value="NC_003030.1"/>
</dbReference>
<dbReference type="RefSeq" id="WP_010965560.1">
    <property type="nucleotide sequence ID" value="NC_003030.1"/>
</dbReference>
<dbReference type="SMR" id="Q97GV3"/>
<dbReference type="STRING" id="272562.CA_C2262"/>
<dbReference type="DNASU" id="1118445"/>
<dbReference type="GeneID" id="44998740"/>
<dbReference type="KEGG" id="cac:CA_C2262"/>
<dbReference type="PATRIC" id="fig|272562.8.peg.2462"/>
<dbReference type="eggNOG" id="COG1074">
    <property type="taxonomic scope" value="Bacteria"/>
</dbReference>
<dbReference type="HOGENOM" id="CLU_001114_3_1_9"/>
<dbReference type="OrthoDB" id="9810135at2"/>
<dbReference type="Proteomes" id="UP000000814">
    <property type="component" value="Chromosome"/>
</dbReference>
<dbReference type="GO" id="GO:0005829">
    <property type="term" value="C:cytosol"/>
    <property type="evidence" value="ECO:0007669"/>
    <property type="project" value="TreeGrafter"/>
</dbReference>
<dbReference type="GO" id="GO:0033202">
    <property type="term" value="C:DNA helicase complex"/>
    <property type="evidence" value="ECO:0007669"/>
    <property type="project" value="TreeGrafter"/>
</dbReference>
<dbReference type="GO" id="GO:0043138">
    <property type="term" value="F:3'-5' DNA helicase activity"/>
    <property type="evidence" value="ECO:0007669"/>
    <property type="project" value="UniProtKB-UniRule"/>
</dbReference>
<dbReference type="GO" id="GO:0008408">
    <property type="term" value="F:3'-5' exonuclease activity"/>
    <property type="evidence" value="ECO:0007669"/>
    <property type="project" value="UniProtKB-UniRule"/>
</dbReference>
<dbReference type="GO" id="GO:0005524">
    <property type="term" value="F:ATP binding"/>
    <property type="evidence" value="ECO:0007669"/>
    <property type="project" value="UniProtKB-UniRule"/>
</dbReference>
<dbReference type="GO" id="GO:0016887">
    <property type="term" value="F:ATP hydrolysis activity"/>
    <property type="evidence" value="ECO:0007669"/>
    <property type="project" value="RHEA"/>
</dbReference>
<dbReference type="GO" id="GO:0003690">
    <property type="term" value="F:double-stranded DNA binding"/>
    <property type="evidence" value="ECO:0007669"/>
    <property type="project" value="UniProtKB-UniRule"/>
</dbReference>
<dbReference type="GO" id="GO:0000724">
    <property type="term" value="P:double-strand break repair via homologous recombination"/>
    <property type="evidence" value="ECO:0007669"/>
    <property type="project" value="UniProtKB-UniRule"/>
</dbReference>
<dbReference type="CDD" id="cd17932">
    <property type="entry name" value="DEXQc_UvrD"/>
    <property type="match status" value="1"/>
</dbReference>
<dbReference type="FunFam" id="3.40.50.300:FF:001236">
    <property type="entry name" value="ATP-dependent helicase/nuclease subunit A"/>
    <property type="match status" value="1"/>
</dbReference>
<dbReference type="Gene3D" id="1.10.274.50">
    <property type="match status" value="1"/>
</dbReference>
<dbReference type="Gene3D" id="3.90.320.10">
    <property type="match status" value="1"/>
</dbReference>
<dbReference type="Gene3D" id="3.40.50.300">
    <property type="entry name" value="P-loop containing nucleotide triphosphate hydrolases"/>
    <property type="match status" value="4"/>
</dbReference>
<dbReference type="HAMAP" id="MF_01451">
    <property type="entry name" value="AddA"/>
    <property type="match status" value="1"/>
</dbReference>
<dbReference type="InterPro" id="IPR014152">
    <property type="entry name" value="AddA"/>
</dbReference>
<dbReference type="InterPro" id="IPR014017">
    <property type="entry name" value="DNA_helicase_UvrD-like_C"/>
</dbReference>
<dbReference type="InterPro" id="IPR000212">
    <property type="entry name" value="DNA_helicase_UvrD/REP"/>
</dbReference>
<dbReference type="InterPro" id="IPR027417">
    <property type="entry name" value="P-loop_NTPase"/>
</dbReference>
<dbReference type="InterPro" id="IPR011604">
    <property type="entry name" value="PDDEXK-like_dom_sf"/>
</dbReference>
<dbReference type="InterPro" id="IPR011335">
    <property type="entry name" value="Restrct_endonuc-II-like"/>
</dbReference>
<dbReference type="InterPro" id="IPR014016">
    <property type="entry name" value="UvrD-like_ATP-bd"/>
</dbReference>
<dbReference type="NCBIfam" id="TIGR02785">
    <property type="entry name" value="addA_Gpos"/>
    <property type="match status" value="1"/>
</dbReference>
<dbReference type="PANTHER" id="PTHR11070:SF48">
    <property type="entry name" value="ATP-DEPENDENT HELICASE_NUCLEASE SUBUNIT A"/>
    <property type="match status" value="1"/>
</dbReference>
<dbReference type="PANTHER" id="PTHR11070">
    <property type="entry name" value="UVRD / RECB / PCRA DNA HELICASE FAMILY MEMBER"/>
    <property type="match status" value="1"/>
</dbReference>
<dbReference type="Pfam" id="PF00580">
    <property type="entry name" value="UvrD-helicase"/>
    <property type="match status" value="1"/>
</dbReference>
<dbReference type="Pfam" id="PF13361">
    <property type="entry name" value="UvrD_C"/>
    <property type="match status" value="1"/>
</dbReference>
<dbReference type="SUPFAM" id="SSF52540">
    <property type="entry name" value="P-loop containing nucleoside triphosphate hydrolases"/>
    <property type="match status" value="1"/>
</dbReference>
<dbReference type="SUPFAM" id="SSF52980">
    <property type="entry name" value="Restriction endonuclease-like"/>
    <property type="match status" value="1"/>
</dbReference>
<dbReference type="PROSITE" id="PS51198">
    <property type="entry name" value="UVRD_HELICASE_ATP_BIND"/>
    <property type="match status" value="1"/>
</dbReference>
<dbReference type="PROSITE" id="PS51217">
    <property type="entry name" value="UVRD_HELICASE_CTER"/>
    <property type="match status" value="1"/>
</dbReference>
<protein>
    <recommendedName>
        <fullName evidence="1">ATP-dependent helicase/nuclease subunit A</fullName>
        <ecNumber evidence="1">3.1.-.-</ecNumber>
        <ecNumber evidence="1">5.6.2.4</ecNumber>
    </recommendedName>
    <alternativeName>
        <fullName evidence="1">ATP-dependent helicase/nuclease AddA</fullName>
    </alternativeName>
    <alternativeName>
        <fullName evidence="1">DNA 3'-5' helicase AddA</fullName>
    </alternativeName>
</protein>
<feature type="chain" id="PRO_0000379247" description="ATP-dependent helicase/nuclease subunit A">
    <location>
        <begin position="1"/>
        <end position="1252"/>
    </location>
</feature>
<feature type="domain" description="UvrD-like helicase ATP-binding" evidence="1">
    <location>
        <begin position="6"/>
        <end position="489"/>
    </location>
</feature>
<feature type="domain" description="UvrD-like helicase C-terminal" evidence="1">
    <location>
        <begin position="523"/>
        <end position="811"/>
    </location>
</feature>
<feature type="binding site" evidence="1">
    <location>
        <begin position="27"/>
        <end position="34"/>
    </location>
    <ligand>
        <name>ATP</name>
        <dbReference type="ChEBI" id="CHEBI:30616"/>
    </ligand>
</feature>
<name>ADDA_CLOAB</name>
<keyword id="KW-0067">ATP-binding</keyword>
<keyword id="KW-0227">DNA damage</keyword>
<keyword id="KW-0234">DNA repair</keyword>
<keyword id="KW-0238">DNA-binding</keyword>
<keyword id="KW-0269">Exonuclease</keyword>
<keyword id="KW-0347">Helicase</keyword>
<keyword id="KW-0378">Hydrolase</keyword>
<keyword id="KW-0413">Isomerase</keyword>
<keyword id="KW-0540">Nuclease</keyword>
<keyword id="KW-0547">Nucleotide-binding</keyword>
<keyword id="KW-1185">Reference proteome</keyword>
<accession>Q97GV3</accession>
<organism>
    <name type="scientific">Clostridium acetobutylicum (strain ATCC 824 / DSM 792 / JCM 1419 / IAM 19013 / LMG 5710 / NBRC 13948 / NRRL B-527 / VKM B-1787 / 2291 / W)</name>
    <dbReference type="NCBI Taxonomy" id="272562"/>
    <lineage>
        <taxon>Bacteria</taxon>
        <taxon>Bacillati</taxon>
        <taxon>Bacillota</taxon>
        <taxon>Clostridia</taxon>
        <taxon>Eubacteriales</taxon>
        <taxon>Clostridiaceae</taxon>
        <taxon>Clostridium</taxon>
    </lineage>
</organism>
<sequence>MNVGKTNWTEEQKEAIDTRNCNLLVAAAAGSGKTAVLVERIVKIITNEENPVDIDRLLVVTFTNAAASEMRERIGDAIVNKLCENPNSRVIQKQLALIGKSKITTIHSFCLDVIKNNFHMLDLDPDFRVGDETEIILLKNETLEELFEDKYLQAEYTSKGINKNNNSIEFLKLVESYCGNKNDQVLFNMVMNLYNFSMSNPEPYKWLKKAAERFNVDDDFEFGDSLWAEVLMKNIQIQLLGMKGQLIESINIINSCASIESYRENLEVELSMLEKLIVASNNYEKLYEELKNVQFKTLKRCPKDADKEKQKLVRDLRDGVKKSLSKISEDILSQNSEEIKEEFKVLYPLMKTLSELVIEFDIRYKDKKKKRGIIDFNDFEHMCLSILTKSDESGNIVPSETALKIREKYEEILIDEYQDSNMVQEVILSTISRKDTENPNLFMVGDVKQSIYRFRQANPGIFLEKYNSYKENKDEKNRKVLLYKNFRSRKEVLDSVNFVFKQIMSVNIGELDYDDNEKLNLGANYEEIEENLISHSAELNIIEKSEDNTEIKENNEDEESVDNIMLEARLIGRRIIELKENFKVLDKNTNVYRKAEFKDIVILLRSTKGWANVFSDELKNMGIPVFADANSGYFDAPEVKTMLSLLQVIDNPRQDIPMAAVLKSPVGGFSVEDLIDIKVIEGDTFYDKLKVAADIGDDEFSVRIRTFLNRLYRWRKESLYTPIDEFIWYLYTDTGYYGYVGAVSGGIQRQANLKMLFQRAKIYSETSYKGLFNFINFINKLKLTSGDMGSAKILGENENVVRIMSIHKSKGLEFPIVFVGGLGKNFNLMDMNNPVLFHNYLGFGPEYVDYKKRISHKTLAKEAIKNRIRIETLSEEMRILYVAFTRAKEKLIMVGSVSDIKRSVFKWAVNLRSNQNKISEDYVLKSKSFLDWIASAVIRHKDAENLRDIMDTSKENIDNLVCDPSSWRVNVLSRNDVLSFNQLLLEEEKNINEKLTQFYKRLKEIRSSNYESVYIEEIKSRLEFKYRYEKAAELPSLLSVTELKRNINEDNDEYATKIFTPSLVKKPLFLEEVKKMSPSERGTAVHSVMQHLDFSSISCDMSIKNIRHQIDDMVFRRILTEKQAESVNINRILKFFQSPIGSRVIKAEKVYREFPFQIRVKSTEIYNDLPKIYDDENIIVQGIVDLFFKENDEIVLLDYKNDYINDENLNETVKKYTYQINYYKRALEIVTGLKVKEKYLYLFYTGDTIKIE</sequence>
<comment type="function">
    <text evidence="1">The heterodimer acts as both an ATP-dependent DNA helicase and an ATP-dependent, dual-direction single-stranded exonuclease. Recognizes the chi site generating a DNA molecule suitable for the initiation of homologous recombination. The AddA nuclease domain is required for chi fragment generation; this subunit has the helicase and 3' -&gt; 5' nuclease activities.</text>
</comment>
<comment type="catalytic activity">
    <reaction evidence="1">
        <text>Couples ATP hydrolysis with the unwinding of duplex DNA by translocating in the 3'-5' direction.</text>
        <dbReference type="EC" id="5.6.2.4"/>
    </reaction>
</comment>
<comment type="catalytic activity">
    <reaction evidence="1">
        <text>ATP + H2O = ADP + phosphate + H(+)</text>
        <dbReference type="Rhea" id="RHEA:13065"/>
        <dbReference type="ChEBI" id="CHEBI:15377"/>
        <dbReference type="ChEBI" id="CHEBI:15378"/>
        <dbReference type="ChEBI" id="CHEBI:30616"/>
        <dbReference type="ChEBI" id="CHEBI:43474"/>
        <dbReference type="ChEBI" id="CHEBI:456216"/>
        <dbReference type="EC" id="5.6.2.4"/>
    </reaction>
</comment>
<comment type="cofactor">
    <cofactor evidence="1">
        <name>Mg(2+)</name>
        <dbReference type="ChEBI" id="CHEBI:18420"/>
    </cofactor>
</comment>
<comment type="subunit">
    <text evidence="1">Heterodimer of AddA and AddB/RexB.</text>
</comment>
<comment type="similarity">
    <text evidence="1">Belongs to the helicase family. AddA subfamily.</text>
</comment>
<proteinExistence type="inferred from homology"/>
<reference key="1">
    <citation type="journal article" date="2001" name="J. Bacteriol.">
        <title>Genome sequence and comparative analysis of the solvent-producing bacterium Clostridium acetobutylicum.</title>
        <authorList>
            <person name="Noelling J."/>
            <person name="Breton G."/>
            <person name="Omelchenko M.V."/>
            <person name="Makarova K.S."/>
            <person name="Zeng Q."/>
            <person name="Gibson R."/>
            <person name="Lee H.M."/>
            <person name="Dubois J."/>
            <person name="Qiu D."/>
            <person name="Hitti J."/>
            <person name="Wolf Y.I."/>
            <person name="Tatusov R.L."/>
            <person name="Sabathe F."/>
            <person name="Doucette-Stamm L.A."/>
            <person name="Soucaille P."/>
            <person name="Daly M.J."/>
            <person name="Bennett G.N."/>
            <person name="Koonin E.V."/>
            <person name="Smith D.R."/>
        </authorList>
    </citation>
    <scope>NUCLEOTIDE SEQUENCE [LARGE SCALE GENOMIC DNA]</scope>
    <source>
        <strain>ATCC 824 / DSM 792 / JCM 1419 / IAM 19013 / LMG 5710 / NBRC 13948 / NRRL B-527 / VKM B-1787 / 2291 / W</strain>
    </source>
</reference>
<gene>
    <name evidence="1" type="primary">addA</name>
    <name type="ordered locus">CA_C2262</name>
</gene>